<reference key="1">
    <citation type="journal article" date="2006" name="Nature">
        <title>DNA sequence and analysis of human chromosome 8.</title>
        <authorList>
            <person name="Nusbaum C."/>
            <person name="Mikkelsen T.S."/>
            <person name="Zody M.C."/>
            <person name="Asakawa S."/>
            <person name="Taudien S."/>
            <person name="Garber M."/>
            <person name="Kodira C.D."/>
            <person name="Schueler M.G."/>
            <person name="Shimizu A."/>
            <person name="Whittaker C.A."/>
            <person name="Chang J.L."/>
            <person name="Cuomo C.A."/>
            <person name="Dewar K."/>
            <person name="FitzGerald M.G."/>
            <person name="Yang X."/>
            <person name="Allen N.R."/>
            <person name="Anderson S."/>
            <person name="Asakawa T."/>
            <person name="Blechschmidt K."/>
            <person name="Bloom T."/>
            <person name="Borowsky M.L."/>
            <person name="Butler J."/>
            <person name="Cook A."/>
            <person name="Corum B."/>
            <person name="DeArellano K."/>
            <person name="DeCaprio D."/>
            <person name="Dooley K.T."/>
            <person name="Dorris L. III"/>
            <person name="Engels R."/>
            <person name="Gloeckner G."/>
            <person name="Hafez N."/>
            <person name="Hagopian D.S."/>
            <person name="Hall J.L."/>
            <person name="Ishikawa S.K."/>
            <person name="Jaffe D.B."/>
            <person name="Kamat A."/>
            <person name="Kudoh J."/>
            <person name="Lehmann R."/>
            <person name="Lokitsang T."/>
            <person name="Macdonald P."/>
            <person name="Major J.E."/>
            <person name="Matthews C.D."/>
            <person name="Mauceli E."/>
            <person name="Menzel U."/>
            <person name="Mihalev A.H."/>
            <person name="Minoshima S."/>
            <person name="Murayama Y."/>
            <person name="Naylor J.W."/>
            <person name="Nicol R."/>
            <person name="Nguyen C."/>
            <person name="O'Leary S.B."/>
            <person name="O'Neill K."/>
            <person name="Parker S.C.J."/>
            <person name="Polley A."/>
            <person name="Raymond C.K."/>
            <person name="Reichwald K."/>
            <person name="Rodriguez J."/>
            <person name="Sasaki T."/>
            <person name="Schilhabel M."/>
            <person name="Siddiqui R."/>
            <person name="Smith C.L."/>
            <person name="Sneddon T.P."/>
            <person name="Talamas J.A."/>
            <person name="Tenzin P."/>
            <person name="Topham K."/>
            <person name="Venkataraman V."/>
            <person name="Wen G."/>
            <person name="Yamazaki S."/>
            <person name="Young S.K."/>
            <person name="Zeng Q."/>
            <person name="Zimmer A.R."/>
            <person name="Rosenthal A."/>
            <person name="Birren B.W."/>
            <person name="Platzer M."/>
            <person name="Shimizu N."/>
            <person name="Lander E.S."/>
        </authorList>
    </citation>
    <scope>NUCLEOTIDE SEQUENCE [LARGE SCALE GENOMIC DNA]</scope>
</reference>
<evidence type="ECO:0000256" key="1">
    <source>
        <dbReference type="SAM" id="MobiDB-lite"/>
    </source>
</evidence>
<evidence type="ECO:0000305" key="2"/>
<evidence type="ECO:0000312" key="3">
    <source>
        <dbReference type="HGNC" id="HGNC:32270"/>
    </source>
</evidence>
<protein>
    <recommendedName>
        <fullName>Protein FAM90A22</fullName>
    </recommendedName>
</protein>
<comment type="similarity">
    <text evidence="2">Belongs to the FAM90 family.</text>
</comment>
<accession>A8MWA6</accession>
<name>F90AM_HUMAN</name>
<gene>
    <name evidence="3" type="primary">FAM90A22</name>
    <name type="synonym">FAM90A22P</name>
</gene>
<proteinExistence type="inferred from homology"/>
<dbReference type="EMBL" id="AC134684">
    <property type="status" value="NOT_ANNOTATED_CDS"/>
    <property type="molecule type" value="Genomic_DNA"/>
</dbReference>
<dbReference type="CCDS" id="CCDS94251.1"/>
<dbReference type="RefSeq" id="NP_001384311.1">
    <property type="nucleotide sequence ID" value="NM_001397382.1"/>
</dbReference>
<dbReference type="GlyGen" id="A8MWA6">
    <property type="glycosylation" value="1 site"/>
</dbReference>
<dbReference type="BioMuta" id="HGNC:32270"/>
<dbReference type="MassIVE" id="A8MWA6"/>
<dbReference type="Ensembl" id="ENST00000648590.1">
    <property type="protein sequence ID" value="ENSP00000496925.1"/>
    <property type="gene ID" value="ENSG00000285687.1"/>
</dbReference>
<dbReference type="GeneID" id="645558"/>
<dbReference type="MANE-Select" id="ENST00000648590.1">
    <property type="protein sequence ID" value="ENSP00000496925.1"/>
    <property type="RefSeq nucleotide sequence ID" value="NM_001397382.1"/>
    <property type="RefSeq protein sequence ID" value="NP_001384311.1"/>
</dbReference>
<dbReference type="AGR" id="HGNC:32270"/>
<dbReference type="GeneCards" id="FAM90A22"/>
<dbReference type="HGNC" id="HGNC:32270">
    <property type="gene designation" value="FAM90A22"/>
</dbReference>
<dbReference type="HPA" id="ENSG00000285687">
    <property type="expression patterns" value="Not detected"/>
</dbReference>
<dbReference type="neXtProt" id="NX_A8MWA6"/>
<dbReference type="VEuPathDB" id="HostDB:ENSG00000285687"/>
<dbReference type="GeneTree" id="ENSGT00910000144208"/>
<dbReference type="InParanoid" id="A8MWA6"/>
<dbReference type="PAN-GO" id="A8MWA6">
    <property type="GO annotations" value="0 GO annotations based on evolutionary models"/>
</dbReference>
<dbReference type="PhylomeDB" id="A8MWA6"/>
<dbReference type="Pharos" id="A8MWA6">
    <property type="development level" value="Tdark"/>
</dbReference>
<dbReference type="Proteomes" id="UP000005640">
    <property type="component" value="Chromosome 8"/>
</dbReference>
<dbReference type="RNAct" id="A8MWA6">
    <property type="molecule type" value="protein"/>
</dbReference>
<dbReference type="InterPro" id="IPR039213">
    <property type="entry name" value="FAM90"/>
</dbReference>
<dbReference type="InterPro" id="IPR041670">
    <property type="entry name" value="Znf-CCHC_6"/>
</dbReference>
<dbReference type="PANTHER" id="PTHR16035:SF14">
    <property type="entry name" value="FAMILY WITH SEQUENCE SIMILARITY 90 MEMBER A11, PSEUDOGENE-RELATED"/>
    <property type="match status" value="1"/>
</dbReference>
<dbReference type="PANTHER" id="PTHR16035">
    <property type="entry name" value="PROTEIN FAM90A1"/>
    <property type="match status" value="1"/>
</dbReference>
<dbReference type="Pfam" id="PF15288">
    <property type="entry name" value="zf-CCHC_6"/>
    <property type="match status" value="1"/>
</dbReference>
<feature type="chain" id="PRO_0000346757" description="Protein FAM90A22">
    <location>
        <begin position="1"/>
        <end position="464"/>
    </location>
</feature>
<feature type="region of interest" description="Disordered" evidence="1">
    <location>
        <begin position="1"/>
        <end position="43"/>
    </location>
</feature>
<feature type="region of interest" description="Disordered" evidence="1">
    <location>
        <begin position="70"/>
        <end position="389"/>
    </location>
</feature>
<feature type="region of interest" description="Disordered" evidence="1">
    <location>
        <begin position="415"/>
        <end position="437"/>
    </location>
</feature>
<feature type="compositionally biased region" description="Basic and acidic residues" evidence="1">
    <location>
        <begin position="74"/>
        <end position="89"/>
    </location>
</feature>
<feature type="compositionally biased region" description="Basic and acidic residues" evidence="1">
    <location>
        <begin position="97"/>
        <end position="114"/>
    </location>
</feature>
<feature type="compositionally biased region" description="Low complexity" evidence="1">
    <location>
        <begin position="182"/>
        <end position="197"/>
    </location>
</feature>
<sequence length="464" mass="49874">MMARRDPKSWAKRLVRAQTLQKQRRARVGPRAPPPDEEDPRLKCKNCGAFGHTARSTRCPMKCWKAALVPATLGKKEGKENLKPWKPRAEANPGPLNKDKGEKEERPRQQDPQRKALLHMFSGKPPEKPLPNGKGSTESSDYLRVASGPMPVHTTSKRPRLDPVLADRSATEMSGRGSVLASLSPLRKTSLSSSSSLGPKERQTGAAADMPQPAVRHQGPEPLLEVKPTHSRPEGGCQEVPQAASKTHGLLQASRPQAQDKRPAVTPQPCPPAATHSLGLGSNLSFGPGAKKPAQAPIQACLNFPKKPRLGPFQIPESAIQGGELGAPENLQPPPAATELGPSTSPQMGRRTPAQVPSVDRQPPHSRPCLPTAQACTMSHHSAAGHDGAQPLRVLFRRLENGRWSSSLLAAPSFHSPEKPGAFLAQSPHVSEKSEAPCVRVPPSVLYEDLQVSSSSEDSDSDLE</sequence>
<keyword id="KW-1185">Reference proteome</keyword>
<organism>
    <name type="scientific">Homo sapiens</name>
    <name type="common">Human</name>
    <dbReference type="NCBI Taxonomy" id="9606"/>
    <lineage>
        <taxon>Eukaryota</taxon>
        <taxon>Metazoa</taxon>
        <taxon>Chordata</taxon>
        <taxon>Craniata</taxon>
        <taxon>Vertebrata</taxon>
        <taxon>Euteleostomi</taxon>
        <taxon>Mammalia</taxon>
        <taxon>Eutheria</taxon>
        <taxon>Euarchontoglires</taxon>
        <taxon>Primates</taxon>
        <taxon>Haplorrhini</taxon>
        <taxon>Catarrhini</taxon>
        <taxon>Hominidae</taxon>
        <taxon>Homo</taxon>
    </lineage>
</organism>